<keyword id="KW-0963">Cytoplasm</keyword>
<keyword id="KW-1185">Reference proteome</keyword>
<keyword id="KW-0694">RNA-binding</keyword>
<evidence type="ECO:0000255" key="1">
    <source>
        <dbReference type="HAMAP-Rule" id="MF_00023"/>
    </source>
</evidence>
<organism>
    <name type="scientific">Oenococcus oeni (strain ATCC BAA-331 / PSU-1)</name>
    <dbReference type="NCBI Taxonomy" id="203123"/>
    <lineage>
        <taxon>Bacteria</taxon>
        <taxon>Bacillati</taxon>
        <taxon>Bacillota</taxon>
        <taxon>Bacilli</taxon>
        <taxon>Lactobacillales</taxon>
        <taxon>Lactobacillaceae</taxon>
        <taxon>Oenococcus</taxon>
    </lineage>
</organism>
<dbReference type="EMBL" id="CP000411">
    <property type="protein sequence ID" value="ABJ57299.1"/>
    <property type="molecule type" value="Genomic_DNA"/>
</dbReference>
<dbReference type="RefSeq" id="WP_002817314.1">
    <property type="nucleotide sequence ID" value="NC_008528.1"/>
</dbReference>
<dbReference type="SMR" id="Q04E23"/>
<dbReference type="STRING" id="203123.OEOE_1438"/>
<dbReference type="GeneID" id="75066346"/>
<dbReference type="KEGG" id="ooe:OEOE_1438"/>
<dbReference type="eggNOG" id="COG0691">
    <property type="taxonomic scope" value="Bacteria"/>
</dbReference>
<dbReference type="HOGENOM" id="CLU_108953_0_1_9"/>
<dbReference type="Proteomes" id="UP000000774">
    <property type="component" value="Chromosome"/>
</dbReference>
<dbReference type="GO" id="GO:0005829">
    <property type="term" value="C:cytosol"/>
    <property type="evidence" value="ECO:0007669"/>
    <property type="project" value="TreeGrafter"/>
</dbReference>
<dbReference type="GO" id="GO:0003723">
    <property type="term" value="F:RNA binding"/>
    <property type="evidence" value="ECO:0007669"/>
    <property type="project" value="UniProtKB-UniRule"/>
</dbReference>
<dbReference type="GO" id="GO:0070929">
    <property type="term" value="P:trans-translation"/>
    <property type="evidence" value="ECO:0007669"/>
    <property type="project" value="UniProtKB-UniRule"/>
</dbReference>
<dbReference type="CDD" id="cd09294">
    <property type="entry name" value="SmpB"/>
    <property type="match status" value="1"/>
</dbReference>
<dbReference type="Gene3D" id="2.40.280.10">
    <property type="match status" value="1"/>
</dbReference>
<dbReference type="HAMAP" id="MF_00023">
    <property type="entry name" value="SmpB"/>
    <property type="match status" value="1"/>
</dbReference>
<dbReference type="InterPro" id="IPR023620">
    <property type="entry name" value="SmpB"/>
</dbReference>
<dbReference type="InterPro" id="IPR000037">
    <property type="entry name" value="SsrA-bd_prot"/>
</dbReference>
<dbReference type="InterPro" id="IPR020081">
    <property type="entry name" value="SsrA-bd_prot_CS"/>
</dbReference>
<dbReference type="NCBIfam" id="NF003843">
    <property type="entry name" value="PRK05422.1"/>
    <property type="match status" value="1"/>
</dbReference>
<dbReference type="NCBIfam" id="TIGR00086">
    <property type="entry name" value="smpB"/>
    <property type="match status" value="1"/>
</dbReference>
<dbReference type="PANTHER" id="PTHR30308:SF2">
    <property type="entry name" value="SSRA-BINDING PROTEIN"/>
    <property type="match status" value="1"/>
</dbReference>
<dbReference type="PANTHER" id="PTHR30308">
    <property type="entry name" value="TMRNA-BINDING COMPONENT OF TRANS-TRANSLATION TAGGING COMPLEX"/>
    <property type="match status" value="1"/>
</dbReference>
<dbReference type="Pfam" id="PF01668">
    <property type="entry name" value="SmpB"/>
    <property type="match status" value="1"/>
</dbReference>
<dbReference type="SUPFAM" id="SSF74982">
    <property type="entry name" value="Small protein B (SmpB)"/>
    <property type="match status" value="1"/>
</dbReference>
<dbReference type="PROSITE" id="PS01317">
    <property type="entry name" value="SSRP"/>
    <property type="match status" value="1"/>
</dbReference>
<comment type="function">
    <text evidence="1">Required for rescue of stalled ribosomes mediated by trans-translation. Binds to transfer-messenger RNA (tmRNA), required for stable association of tmRNA with ribosomes. tmRNA and SmpB together mimic tRNA shape, replacing the anticodon stem-loop with SmpB. tmRNA is encoded by the ssrA gene; the 2 termini fold to resemble tRNA(Ala) and it encodes a 'tag peptide', a short internal open reading frame. During trans-translation Ala-aminoacylated tmRNA acts like a tRNA, entering the A-site of stalled ribosomes, displacing the stalled mRNA. The ribosome then switches to translate the ORF on the tmRNA; the nascent peptide is terminated with the 'tag peptide' encoded by the tmRNA and targeted for degradation. The ribosome is freed to recommence translation, which seems to be the essential function of trans-translation.</text>
</comment>
<comment type="subcellular location">
    <subcellularLocation>
        <location evidence="1">Cytoplasm</location>
    </subcellularLocation>
    <text evidence="1">The tmRNA-SmpB complex associates with stalled 70S ribosomes.</text>
</comment>
<comment type="similarity">
    <text evidence="1">Belongs to the SmpB family.</text>
</comment>
<feature type="chain" id="PRO_1000057208" description="SsrA-binding protein">
    <location>
        <begin position="1"/>
        <end position="155"/>
    </location>
</feature>
<accession>Q04E23</accession>
<gene>
    <name evidence="1" type="primary">smpB</name>
    <name type="ordered locus">OEOE_1438</name>
</gene>
<protein>
    <recommendedName>
        <fullName evidence="1">SsrA-binding protein</fullName>
    </recommendedName>
    <alternativeName>
        <fullName evidence="1">Small protein B</fullName>
    </alternativeName>
</protein>
<reference key="1">
    <citation type="journal article" date="2006" name="Proc. Natl. Acad. Sci. U.S.A.">
        <title>Comparative genomics of the lactic acid bacteria.</title>
        <authorList>
            <person name="Makarova K.S."/>
            <person name="Slesarev A."/>
            <person name="Wolf Y.I."/>
            <person name="Sorokin A."/>
            <person name="Mirkin B."/>
            <person name="Koonin E.V."/>
            <person name="Pavlov A."/>
            <person name="Pavlova N."/>
            <person name="Karamychev V."/>
            <person name="Polouchine N."/>
            <person name="Shakhova V."/>
            <person name="Grigoriev I."/>
            <person name="Lou Y."/>
            <person name="Rohksar D."/>
            <person name="Lucas S."/>
            <person name="Huang K."/>
            <person name="Goodstein D.M."/>
            <person name="Hawkins T."/>
            <person name="Plengvidhya V."/>
            <person name="Welker D."/>
            <person name="Hughes J."/>
            <person name="Goh Y."/>
            <person name="Benson A."/>
            <person name="Baldwin K."/>
            <person name="Lee J.-H."/>
            <person name="Diaz-Muniz I."/>
            <person name="Dosti B."/>
            <person name="Smeianov V."/>
            <person name="Wechter W."/>
            <person name="Barabote R."/>
            <person name="Lorca G."/>
            <person name="Altermann E."/>
            <person name="Barrangou R."/>
            <person name="Ganesan B."/>
            <person name="Xie Y."/>
            <person name="Rawsthorne H."/>
            <person name="Tamir D."/>
            <person name="Parker C."/>
            <person name="Breidt F."/>
            <person name="Broadbent J.R."/>
            <person name="Hutkins R."/>
            <person name="O'Sullivan D."/>
            <person name="Steele J."/>
            <person name="Unlu G."/>
            <person name="Saier M.H. Jr."/>
            <person name="Klaenhammer T."/>
            <person name="Richardson P."/>
            <person name="Kozyavkin S."/>
            <person name="Weimer B.C."/>
            <person name="Mills D.A."/>
        </authorList>
    </citation>
    <scope>NUCLEOTIDE SEQUENCE [LARGE SCALE GENOMIC DNA]</scope>
    <source>
        <strain>ATCC BAA-331 / PSU-1</strain>
    </source>
</reference>
<sequence>MAKKDKHDDALARNRRASFNYFIGETYEAGIQLTGTEIKSVRLGQITIGDAYITVRDQQAFLNNANISPYKQGNQFNVDPLRRRKLLLHKKEILALDRAVSKEGKTIVPLRVYIVKGFAKILIAIGTGKKNYDKRQTIKERDLKRELGKNLKNFH</sequence>
<proteinExistence type="inferred from homology"/>
<name>SSRP_OENOB</name>